<sequence length="239" mass="25252">MANISSIHILFLVFITSGIAVMATDFTLRNNCPTTVWAGTLAGQGPKLGDGGFELTPGASRQLTAPAGWSGRFWARTGCNFDASGNGRCVTGDCGGLRCNGGGVPPVTLAEFTLVGDGGKDFYDVSLVDGYNVKLGIRPSGGSGDCKYAGCVSDLNAACPDMLKVMDQNNVVACKSACERFNTDQYCCRGANDKPETCPPTDYSRIFKNACPDAYSYAYDDETSTFTCTGANYEITFCP</sequence>
<dbReference type="EMBL" id="M90510">
    <property type="protein sequence ID" value="AAA32865.1"/>
    <property type="molecule type" value="mRNA"/>
</dbReference>
<dbReference type="EMBL" id="L78079">
    <property type="protein sequence ID" value="AAB68336.1"/>
    <property type="molecule type" value="mRNA"/>
</dbReference>
<dbReference type="EMBL" id="AC013258">
    <property type="protein sequence ID" value="AAG51923.1"/>
    <property type="molecule type" value="Genomic_DNA"/>
</dbReference>
<dbReference type="EMBL" id="CP002684">
    <property type="protein sequence ID" value="AEE35665.1"/>
    <property type="molecule type" value="Genomic_DNA"/>
</dbReference>
<dbReference type="EMBL" id="AY035168">
    <property type="protein sequence ID" value="AAK59672.1"/>
    <property type="molecule type" value="mRNA"/>
</dbReference>
<dbReference type="EMBL" id="AY059114">
    <property type="protein sequence ID" value="AAL15220.1"/>
    <property type="molecule type" value="mRNA"/>
</dbReference>
<dbReference type="PIR" id="JQ1695">
    <property type="entry name" value="JQ1695"/>
</dbReference>
<dbReference type="SMR" id="P28493"/>
<dbReference type="FunCoup" id="P28493">
    <property type="interactions" value="3"/>
</dbReference>
<dbReference type="IntAct" id="P28493">
    <property type="interactions" value="1"/>
</dbReference>
<dbReference type="STRING" id="3702.P28493"/>
<dbReference type="PaxDb" id="3702-AT1G75040.1"/>
<dbReference type="ProteomicsDB" id="226336"/>
<dbReference type="EnsemblPlants" id="AT1G75040.1">
    <property type="protein sequence ID" value="AT1G75040.1"/>
    <property type="gene ID" value="AT1G75040"/>
</dbReference>
<dbReference type="Gramene" id="AT1G75040.1">
    <property type="protein sequence ID" value="AT1G75040.1"/>
    <property type="gene ID" value="AT1G75040"/>
</dbReference>
<dbReference type="KEGG" id="ath:AT1G75040"/>
<dbReference type="Araport" id="AT1G75040"/>
<dbReference type="TAIR" id="AT1G75040">
    <property type="gene designation" value="PR5"/>
</dbReference>
<dbReference type="eggNOG" id="ENOG502QUEJ">
    <property type="taxonomic scope" value="Eukaryota"/>
</dbReference>
<dbReference type="HOGENOM" id="CLU_043181_0_1_1"/>
<dbReference type="InParanoid" id="P28493"/>
<dbReference type="OMA" id="CIGDHAT"/>
<dbReference type="OrthoDB" id="430315at2759"/>
<dbReference type="PhylomeDB" id="P28493"/>
<dbReference type="PRO" id="PR:P28493"/>
<dbReference type="Proteomes" id="UP000006548">
    <property type="component" value="Chromosome 1"/>
</dbReference>
<dbReference type="ExpressionAtlas" id="P28493">
    <property type="expression patterns" value="baseline and differential"/>
</dbReference>
<dbReference type="GO" id="GO:0048046">
    <property type="term" value="C:apoplast"/>
    <property type="evidence" value="ECO:0007005"/>
    <property type="project" value="TAIR"/>
</dbReference>
<dbReference type="GO" id="GO:0005739">
    <property type="term" value="C:mitochondrion"/>
    <property type="evidence" value="ECO:0007005"/>
    <property type="project" value="TAIR"/>
</dbReference>
<dbReference type="GO" id="GO:0000325">
    <property type="term" value="C:plant-type vacuole"/>
    <property type="evidence" value="ECO:0007005"/>
    <property type="project" value="TAIR"/>
</dbReference>
<dbReference type="GO" id="GO:0099503">
    <property type="term" value="C:secretory vesicle"/>
    <property type="evidence" value="ECO:0007005"/>
    <property type="project" value="TAIR"/>
</dbReference>
<dbReference type="GO" id="GO:0003729">
    <property type="term" value="F:mRNA binding"/>
    <property type="evidence" value="ECO:0000314"/>
    <property type="project" value="TAIR"/>
</dbReference>
<dbReference type="GO" id="GO:0031540">
    <property type="term" value="P:regulation of anthocyanin biosynthetic process"/>
    <property type="evidence" value="ECO:0000270"/>
    <property type="project" value="TAIR"/>
</dbReference>
<dbReference type="GO" id="GO:0046686">
    <property type="term" value="P:response to cadmium ion"/>
    <property type="evidence" value="ECO:0000270"/>
    <property type="project" value="TAIR"/>
</dbReference>
<dbReference type="GO" id="GO:0010224">
    <property type="term" value="P:response to UV-B"/>
    <property type="evidence" value="ECO:0000316"/>
    <property type="project" value="TAIR"/>
</dbReference>
<dbReference type="GO" id="GO:0009615">
    <property type="term" value="P:response to virus"/>
    <property type="evidence" value="ECO:0000270"/>
    <property type="project" value="TAIR"/>
</dbReference>
<dbReference type="GO" id="GO:0009627">
    <property type="term" value="P:systemic acquired resistance"/>
    <property type="evidence" value="ECO:0000270"/>
    <property type="project" value="TAIR"/>
</dbReference>
<dbReference type="CDD" id="cd09218">
    <property type="entry name" value="TLP-PA"/>
    <property type="match status" value="1"/>
</dbReference>
<dbReference type="FunFam" id="2.60.110.10:FF:000002">
    <property type="entry name" value="Thaumatin-like protein 1a"/>
    <property type="match status" value="1"/>
</dbReference>
<dbReference type="Gene3D" id="2.60.110.10">
    <property type="entry name" value="Thaumatin"/>
    <property type="match status" value="1"/>
</dbReference>
<dbReference type="InterPro" id="IPR037176">
    <property type="entry name" value="Osmotin/thaumatin-like_sf"/>
</dbReference>
<dbReference type="InterPro" id="IPR001938">
    <property type="entry name" value="Thaumatin"/>
</dbReference>
<dbReference type="InterPro" id="IPR017949">
    <property type="entry name" value="Thaumatin_CS"/>
</dbReference>
<dbReference type="PANTHER" id="PTHR31048">
    <property type="entry name" value="OS03G0233200 PROTEIN"/>
    <property type="match status" value="1"/>
</dbReference>
<dbReference type="Pfam" id="PF00314">
    <property type="entry name" value="Thaumatin"/>
    <property type="match status" value="1"/>
</dbReference>
<dbReference type="PIRSF" id="PIRSF002703">
    <property type="entry name" value="Thaumatin"/>
    <property type="match status" value="1"/>
</dbReference>
<dbReference type="PRINTS" id="PR00347">
    <property type="entry name" value="THAUMATIN"/>
</dbReference>
<dbReference type="SMART" id="SM00205">
    <property type="entry name" value="THN"/>
    <property type="match status" value="1"/>
</dbReference>
<dbReference type="SUPFAM" id="SSF49870">
    <property type="entry name" value="Osmotin, thaumatin-like protein"/>
    <property type="match status" value="1"/>
</dbReference>
<dbReference type="PROSITE" id="PS00316">
    <property type="entry name" value="THAUMATIN_1"/>
    <property type="match status" value="1"/>
</dbReference>
<dbReference type="PROSITE" id="PS51367">
    <property type="entry name" value="THAUMATIN_2"/>
    <property type="match status" value="1"/>
</dbReference>
<comment type="function">
    <text>Partially responsible for acquired pathogen resistance.</text>
</comment>
<comment type="subcellular location">
    <subcellularLocation>
        <location>Secreted</location>
        <location>Extracellular space</location>
        <location>Apoplast</location>
    </subcellularLocation>
    <text>Accumulates in the apoplast before secretion.</text>
</comment>
<comment type="induction">
    <text>By 2,6-dichloroisonicotinic acid (INA) and salicylic acid (possibly an endogenous signal for acquired resistance). Strongly induced by pathogen infection.</text>
</comment>
<comment type="similarity">
    <text evidence="1">Belongs to the thaumatin family.</text>
</comment>
<protein>
    <recommendedName>
        <fullName>Pathogenesis-related protein 5</fullName>
        <shortName>PR-5</shortName>
    </recommendedName>
</protein>
<name>PR5_ARATH</name>
<reference key="1">
    <citation type="journal article" date="1992" name="Plant Cell">
        <title>Acquired resistance in Arabidopsis.</title>
        <authorList>
            <person name="Uknes S."/>
            <person name="Mauch-Mani B."/>
            <person name="Moyer M."/>
            <person name="Potter S."/>
            <person name="Williams S."/>
            <person name="Dincher S."/>
            <person name="Chandler D."/>
            <person name="Slusarenko A."/>
            <person name="Ward E."/>
            <person name="Ryals J."/>
        </authorList>
    </citation>
    <scope>NUCLEOTIDE SEQUENCE [MRNA]</scope>
    <scope>PARTIAL PROTEIN SEQUENCE</scope>
    <source>
        <strain>cv. Landsberg erecta</strain>
        <tissue>Leaf</tissue>
    </source>
</reference>
<reference key="2">
    <citation type="online journal article" date="1997" name="Plant Gene Register">
        <title>Cloning and characterization of a novel cDNA encoding thaumatin-like protein PR5 from Arabidopsis thaliana.</title>
        <authorList>
            <person name="Arro M."/>
            <person name="Richard L."/>
            <person name="Than Van K.T."/>
            <person name="Ferrer A."/>
            <person name="Boronat A."/>
        </authorList>
        <locator>PGR97-053</locator>
    </citation>
    <scope>NUCLEOTIDE SEQUENCE</scope>
    <source>
        <strain>cv. C24</strain>
        <tissue>Flower</tissue>
    </source>
</reference>
<reference key="3">
    <citation type="journal article" date="2000" name="Nature">
        <title>Sequence and analysis of chromosome 1 of the plant Arabidopsis thaliana.</title>
        <authorList>
            <person name="Theologis A."/>
            <person name="Ecker J.R."/>
            <person name="Palm C.J."/>
            <person name="Federspiel N.A."/>
            <person name="Kaul S."/>
            <person name="White O."/>
            <person name="Alonso J."/>
            <person name="Altafi H."/>
            <person name="Araujo R."/>
            <person name="Bowman C.L."/>
            <person name="Brooks S.Y."/>
            <person name="Buehler E."/>
            <person name="Chan A."/>
            <person name="Chao Q."/>
            <person name="Chen H."/>
            <person name="Cheuk R.F."/>
            <person name="Chin C.W."/>
            <person name="Chung M.K."/>
            <person name="Conn L."/>
            <person name="Conway A.B."/>
            <person name="Conway A.R."/>
            <person name="Creasy T.H."/>
            <person name="Dewar K."/>
            <person name="Dunn P."/>
            <person name="Etgu P."/>
            <person name="Feldblyum T.V."/>
            <person name="Feng J.-D."/>
            <person name="Fong B."/>
            <person name="Fujii C.Y."/>
            <person name="Gill J.E."/>
            <person name="Goldsmith A.D."/>
            <person name="Haas B."/>
            <person name="Hansen N.F."/>
            <person name="Hughes B."/>
            <person name="Huizar L."/>
            <person name="Hunter J.L."/>
            <person name="Jenkins J."/>
            <person name="Johnson-Hopson C."/>
            <person name="Khan S."/>
            <person name="Khaykin E."/>
            <person name="Kim C.J."/>
            <person name="Koo H.L."/>
            <person name="Kremenetskaia I."/>
            <person name="Kurtz D.B."/>
            <person name="Kwan A."/>
            <person name="Lam B."/>
            <person name="Langin-Hooper S."/>
            <person name="Lee A."/>
            <person name="Lee J.M."/>
            <person name="Lenz C.A."/>
            <person name="Li J.H."/>
            <person name="Li Y.-P."/>
            <person name="Lin X."/>
            <person name="Liu S.X."/>
            <person name="Liu Z.A."/>
            <person name="Luros J.S."/>
            <person name="Maiti R."/>
            <person name="Marziali A."/>
            <person name="Militscher J."/>
            <person name="Miranda M."/>
            <person name="Nguyen M."/>
            <person name="Nierman W.C."/>
            <person name="Osborne B.I."/>
            <person name="Pai G."/>
            <person name="Peterson J."/>
            <person name="Pham P.K."/>
            <person name="Rizzo M."/>
            <person name="Rooney T."/>
            <person name="Rowley D."/>
            <person name="Sakano H."/>
            <person name="Salzberg S.L."/>
            <person name="Schwartz J.R."/>
            <person name="Shinn P."/>
            <person name="Southwick A.M."/>
            <person name="Sun H."/>
            <person name="Tallon L.J."/>
            <person name="Tambunga G."/>
            <person name="Toriumi M.J."/>
            <person name="Town C.D."/>
            <person name="Utterback T."/>
            <person name="Van Aken S."/>
            <person name="Vaysberg M."/>
            <person name="Vysotskaia V.S."/>
            <person name="Walker M."/>
            <person name="Wu D."/>
            <person name="Yu G."/>
            <person name="Fraser C.M."/>
            <person name="Venter J.C."/>
            <person name="Davis R.W."/>
        </authorList>
    </citation>
    <scope>NUCLEOTIDE SEQUENCE [LARGE SCALE GENOMIC DNA]</scope>
    <source>
        <strain>cv. Columbia</strain>
    </source>
</reference>
<reference key="4">
    <citation type="journal article" date="2017" name="Plant J.">
        <title>Araport11: a complete reannotation of the Arabidopsis thaliana reference genome.</title>
        <authorList>
            <person name="Cheng C.Y."/>
            <person name="Krishnakumar V."/>
            <person name="Chan A.P."/>
            <person name="Thibaud-Nissen F."/>
            <person name="Schobel S."/>
            <person name="Town C.D."/>
        </authorList>
    </citation>
    <scope>GENOME REANNOTATION</scope>
    <source>
        <strain>cv. Columbia</strain>
    </source>
</reference>
<reference key="5">
    <citation type="journal article" date="2003" name="Science">
        <title>Empirical analysis of transcriptional activity in the Arabidopsis genome.</title>
        <authorList>
            <person name="Yamada K."/>
            <person name="Lim J."/>
            <person name="Dale J.M."/>
            <person name="Chen H."/>
            <person name="Shinn P."/>
            <person name="Palm C.J."/>
            <person name="Southwick A.M."/>
            <person name="Wu H.C."/>
            <person name="Kim C.J."/>
            <person name="Nguyen M."/>
            <person name="Pham P.K."/>
            <person name="Cheuk R.F."/>
            <person name="Karlin-Newmann G."/>
            <person name="Liu S.X."/>
            <person name="Lam B."/>
            <person name="Sakano H."/>
            <person name="Wu T."/>
            <person name="Yu G."/>
            <person name="Miranda M."/>
            <person name="Quach H.L."/>
            <person name="Tripp M."/>
            <person name="Chang C.H."/>
            <person name="Lee J.M."/>
            <person name="Toriumi M.J."/>
            <person name="Chan M.M."/>
            <person name="Tang C.C."/>
            <person name="Onodera C.S."/>
            <person name="Deng J.M."/>
            <person name="Akiyama K."/>
            <person name="Ansari Y."/>
            <person name="Arakawa T."/>
            <person name="Banh J."/>
            <person name="Banno F."/>
            <person name="Bowser L."/>
            <person name="Brooks S.Y."/>
            <person name="Carninci P."/>
            <person name="Chao Q."/>
            <person name="Choy N."/>
            <person name="Enju A."/>
            <person name="Goldsmith A.D."/>
            <person name="Gurjal M."/>
            <person name="Hansen N.F."/>
            <person name="Hayashizaki Y."/>
            <person name="Johnson-Hopson C."/>
            <person name="Hsuan V.W."/>
            <person name="Iida K."/>
            <person name="Karnes M."/>
            <person name="Khan S."/>
            <person name="Koesema E."/>
            <person name="Ishida J."/>
            <person name="Jiang P.X."/>
            <person name="Jones T."/>
            <person name="Kawai J."/>
            <person name="Kamiya A."/>
            <person name="Meyers C."/>
            <person name="Nakajima M."/>
            <person name="Narusaka M."/>
            <person name="Seki M."/>
            <person name="Sakurai T."/>
            <person name="Satou M."/>
            <person name="Tamse R."/>
            <person name="Vaysberg M."/>
            <person name="Wallender E.K."/>
            <person name="Wong C."/>
            <person name="Yamamura Y."/>
            <person name="Yuan S."/>
            <person name="Shinozaki K."/>
            <person name="Davis R.W."/>
            <person name="Theologis A."/>
            <person name="Ecker J.R."/>
        </authorList>
    </citation>
    <scope>NUCLEOTIDE SEQUENCE [LARGE SCALE MRNA]</scope>
    <source>
        <strain>cv. Columbia</strain>
    </source>
</reference>
<keyword id="KW-0052">Apoplast</keyword>
<keyword id="KW-0903">Direct protein sequencing</keyword>
<keyword id="KW-1015">Disulfide bond</keyword>
<keyword id="KW-0568">Pathogenesis-related protein</keyword>
<keyword id="KW-0611">Plant defense</keyword>
<keyword id="KW-1185">Reference proteome</keyword>
<keyword id="KW-0964">Secreted</keyword>
<keyword id="KW-0732">Signal</keyword>
<gene>
    <name type="ordered locus">At1g75040</name>
    <name type="ORF">F9E10.11</name>
</gene>
<proteinExistence type="evidence at protein level"/>
<organism>
    <name type="scientific">Arabidopsis thaliana</name>
    <name type="common">Mouse-ear cress</name>
    <dbReference type="NCBI Taxonomy" id="3702"/>
    <lineage>
        <taxon>Eukaryota</taxon>
        <taxon>Viridiplantae</taxon>
        <taxon>Streptophyta</taxon>
        <taxon>Embryophyta</taxon>
        <taxon>Tracheophyta</taxon>
        <taxon>Spermatophyta</taxon>
        <taxon>Magnoliopsida</taxon>
        <taxon>eudicotyledons</taxon>
        <taxon>Gunneridae</taxon>
        <taxon>Pentapetalae</taxon>
        <taxon>rosids</taxon>
        <taxon>malvids</taxon>
        <taxon>Brassicales</taxon>
        <taxon>Brassicaceae</taxon>
        <taxon>Camelineae</taxon>
        <taxon>Arabidopsis</taxon>
    </lineage>
</organism>
<accession>P28493</accession>
<feature type="signal peptide">
    <location>
        <begin position="1"/>
        <end position="23"/>
    </location>
</feature>
<feature type="chain" id="PRO_0000034036" description="Pathogenesis-related protein 5">
    <location>
        <begin position="24"/>
        <end position="239"/>
    </location>
</feature>
<feature type="disulfide bond" evidence="1">
    <location>
        <begin position="32"/>
        <end position="238"/>
    </location>
</feature>
<feature type="disulfide bond" evidence="1">
    <location>
        <begin position="79"/>
        <end position="89"/>
    </location>
</feature>
<feature type="disulfide bond" evidence="1">
    <location>
        <begin position="94"/>
        <end position="99"/>
    </location>
</feature>
<feature type="disulfide bond" evidence="1">
    <location>
        <begin position="146"/>
        <end position="228"/>
    </location>
</feature>
<feature type="disulfide bond" evidence="1">
    <location>
        <begin position="151"/>
        <end position="211"/>
    </location>
</feature>
<feature type="disulfide bond" evidence="1">
    <location>
        <begin position="159"/>
        <end position="174"/>
    </location>
</feature>
<feature type="disulfide bond" evidence="1">
    <location>
        <begin position="178"/>
        <end position="187"/>
    </location>
</feature>
<feature type="disulfide bond" evidence="1">
    <location>
        <begin position="188"/>
        <end position="198"/>
    </location>
</feature>
<evidence type="ECO:0000255" key="1">
    <source>
        <dbReference type="PROSITE-ProRule" id="PRU00699"/>
    </source>
</evidence>